<organism>
    <name type="scientific">Protochlamydia amoebophila (strain UWE25)</name>
    <dbReference type="NCBI Taxonomy" id="264201"/>
    <lineage>
        <taxon>Bacteria</taxon>
        <taxon>Pseudomonadati</taxon>
        <taxon>Chlamydiota</taxon>
        <taxon>Chlamydiia</taxon>
        <taxon>Parachlamydiales</taxon>
        <taxon>Parachlamydiaceae</taxon>
        <taxon>Candidatus Protochlamydia</taxon>
    </lineage>
</organism>
<comment type="catalytic activity">
    <reaction evidence="1">
        <text>CMP + ATP = CDP + ADP</text>
        <dbReference type="Rhea" id="RHEA:11600"/>
        <dbReference type="ChEBI" id="CHEBI:30616"/>
        <dbReference type="ChEBI" id="CHEBI:58069"/>
        <dbReference type="ChEBI" id="CHEBI:60377"/>
        <dbReference type="ChEBI" id="CHEBI:456216"/>
        <dbReference type="EC" id="2.7.4.25"/>
    </reaction>
</comment>
<comment type="catalytic activity">
    <reaction evidence="1">
        <text>dCMP + ATP = dCDP + ADP</text>
        <dbReference type="Rhea" id="RHEA:25094"/>
        <dbReference type="ChEBI" id="CHEBI:30616"/>
        <dbReference type="ChEBI" id="CHEBI:57566"/>
        <dbReference type="ChEBI" id="CHEBI:58593"/>
        <dbReference type="ChEBI" id="CHEBI:456216"/>
        <dbReference type="EC" id="2.7.4.25"/>
    </reaction>
</comment>
<comment type="subcellular location">
    <subcellularLocation>
        <location evidence="1">Cytoplasm</location>
    </subcellularLocation>
</comment>
<comment type="similarity">
    <text evidence="1">Belongs to the cytidylate kinase family. Type 1 subfamily.</text>
</comment>
<accession>Q6MEF6</accession>
<protein>
    <recommendedName>
        <fullName evidence="1">Cytidylate kinase</fullName>
        <shortName evidence="1">CK</shortName>
        <ecNumber evidence="1">2.7.4.25</ecNumber>
    </recommendedName>
    <alternativeName>
        <fullName evidence="1">Cytidine monophosphate kinase</fullName>
        <shortName evidence="1">CMP kinase</shortName>
    </alternativeName>
</protein>
<gene>
    <name evidence="1" type="primary">cmk</name>
    <name type="ordered locus">pc0319</name>
</gene>
<feature type="chain" id="PRO_0000131950" description="Cytidylate kinase">
    <location>
        <begin position="1"/>
        <end position="228"/>
    </location>
</feature>
<feature type="binding site" evidence="1">
    <location>
        <begin position="7"/>
        <end position="15"/>
    </location>
    <ligand>
        <name>ATP</name>
        <dbReference type="ChEBI" id="CHEBI:30616"/>
    </ligand>
</feature>
<proteinExistence type="inferred from homology"/>
<dbReference type="EC" id="2.7.4.25" evidence="1"/>
<dbReference type="EMBL" id="BX908798">
    <property type="protein sequence ID" value="CAF23043.1"/>
    <property type="molecule type" value="Genomic_DNA"/>
</dbReference>
<dbReference type="RefSeq" id="WP_011174869.1">
    <property type="nucleotide sequence ID" value="NC_005861.2"/>
</dbReference>
<dbReference type="SMR" id="Q6MEF6"/>
<dbReference type="STRING" id="264201.pc0319"/>
<dbReference type="KEGG" id="pcu:PC_RS01550"/>
<dbReference type="eggNOG" id="COG0283">
    <property type="taxonomic scope" value="Bacteria"/>
</dbReference>
<dbReference type="HOGENOM" id="CLU_079959_0_2_0"/>
<dbReference type="OrthoDB" id="9807434at2"/>
<dbReference type="Proteomes" id="UP000000529">
    <property type="component" value="Chromosome"/>
</dbReference>
<dbReference type="GO" id="GO:0005829">
    <property type="term" value="C:cytosol"/>
    <property type="evidence" value="ECO:0007669"/>
    <property type="project" value="TreeGrafter"/>
</dbReference>
<dbReference type="GO" id="GO:0005524">
    <property type="term" value="F:ATP binding"/>
    <property type="evidence" value="ECO:0007669"/>
    <property type="project" value="UniProtKB-UniRule"/>
</dbReference>
<dbReference type="GO" id="GO:0036430">
    <property type="term" value="F:CMP kinase activity"/>
    <property type="evidence" value="ECO:0007669"/>
    <property type="project" value="RHEA"/>
</dbReference>
<dbReference type="GO" id="GO:0036431">
    <property type="term" value="F:dCMP kinase activity"/>
    <property type="evidence" value="ECO:0007669"/>
    <property type="project" value="RHEA"/>
</dbReference>
<dbReference type="GO" id="GO:0015949">
    <property type="term" value="P:nucleobase-containing small molecule interconversion"/>
    <property type="evidence" value="ECO:0007669"/>
    <property type="project" value="TreeGrafter"/>
</dbReference>
<dbReference type="GO" id="GO:0006220">
    <property type="term" value="P:pyrimidine nucleotide metabolic process"/>
    <property type="evidence" value="ECO:0007669"/>
    <property type="project" value="UniProtKB-UniRule"/>
</dbReference>
<dbReference type="CDD" id="cd02020">
    <property type="entry name" value="CMPK"/>
    <property type="match status" value="1"/>
</dbReference>
<dbReference type="Gene3D" id="3.40.50.300">
    <property type="entry name" value="P-loop containing nucleotide triphosphate hydrolases"/>
    <property type="match status" value="1"/>
</dbReference>
<dbReference type="HAMAP" id="MF_00238">
    <property type="entry name" value="Cytidyl_kinase_type1"/>
    <property type="match status" value="1"/>
</dbReference>
<dbReference type="InterPro" id="IPR003136">
    <property type="entry name" value="Cytidylate_kin"/>
</dbReference>
<dbReference type="InterPro" id="IPR011994">
    <property type="entry name" value="Cytidylate_kinase_dom"/>
</dbReference>
<dbReference type="InterPro" id="IPR027417">
    <property type="entry name" value="P-loop_NTPase"/>
</dbReference>
<dbReference type="NCBIfam" id="TIGR00017">
    <property type="entry name" value="cmk"/>
    <property type="match status" value="1"/>
</dbReference>
<dbReference type="PANTHER" id="PTHR21299:SF2">
    <property type="entry name" value="CYTIDYLATE KINASE"/>
    <property type="match status" value="1"/>
</dbReference>
<dbReference type="PANTHER" id="PTHR21299">
    <property type="entry name" value="CYTIDYLATE KINASE/PANTOATE-BETA-ALANINE LIGASE"/>
    <property type="match status" value="1"/>
</dbReference>
<dbReference type="Pfam" id="PF02224">
    <property type="entry name" value="Cytidylate_kin"/>
    <property type="match status" value="1"/>
</dbReference>
<dbReference type="SUPFAM" id="SSF52540">
    <property type="entry name" value="P-loop containing nucleoside triphosphate hydrolases"/>
    <property type="match status" value="1"/>
</dbReference>
<sequence>MIITIDGPVATGKSTIAKKLAESIGFIFFDTGAMYRALTFGILKNQIDLSDPDTLQNYLDHFQFDIKVIHHDRHYFVDKEDVSKLIRGKEVTSSVSKVSAIKAVREKLMAIQRELAEGVNAVFEGRDMGTVVFPNANIKIFLTGRNDVRAKRRYDELTSKFPEETKELTLEKCLEEITKRDNYDSTREYSPLCQAEDAFVIDTSDLSIDEVVYKILEYKDTIKTKRPS</sequence>
<name>KCY_PARUW</name>
<keyword id="KW-0067">ATP-binding</keyword>
<keyword id="KW-0963">Cytoplasm</keyword>
<keyword id="KW-0418">Kinase</keyword>
<keyword id="KW-0547">Nucleotide-binding</keyword>
<keyword id="KW-1185">Reference proteome</keyword>
<keyword id="KW-0808">Transferase</keyword>
<reference key="1">
    <citation type="journal article" date="2004" name="Science">
        <title>Illuminating the evolutionary history of chlamydiae.</title>
        <authorList>
            <person name="Horn M."/>
            <person name="Collingro A."/>
            <person name="Schmitz-Esser S."/>
            <person name="Beier C.L."/>
            <person name="Purkhold U."/>
            <person name="Fartmann B."/>
            <person name="Brandt P."/>
            <person name="Nyakatura G.J."/>
            <person name="Droege M."/>
            <person name="Frishman D."/>
            <person name="Rattei T."/>
            <person name="Mewes H.-W."/>
            <person name="Wagner M."/>
        </authorList>
    </citation>
    <scope>NUCLEOTIDE SEQUENCE [LARGE SCALE GENOMIC DNA]</scope>
    <source>
        <strain>UWE25</strain>
    </source>
</reference>
<evidence type="ECO:0000255" key="1">
    <source>
        <dbReference type="HAMAP-Rule" id="MF_00238"/>
    </source>
</evidence>